<reference key="1">
    <citation type="submission" date="2004-11" db="EMBL/GenBank/DDBJ databases">
        <authorList>
            <consortium name="The German cDNA consortium"/>
        </authorList>
    </citation>
    <scope>NUCLEOTIDE SEQUENCE [LARGE SCALE MRNA]</scope>
    <source>
        <tissue>Kidney</tissue>
    </source>
</reference>
<gene>
    <name type="primary">SIAE</name>
    <name type="synonym">YSG2</name>
</gene>
<feature type="signal peptide" evidence="3">
    <location>
        <begin position="1"/>
        <end position="23"/>
    </location>
</feature>
<feature type="chain" id="PRO_0000042242" description="Sialate O-acetylesterase">
    <location>
        <begin position="24"/>
        <end position="523"/>
    </location>
</feature>
<feature type="glycosylation site" description="N-linked (GlcNAc...) asparagine" evidence="3">
    <location>
        <position position="107"/>
    </location>
</feature>
<feature type="glycosylation site" description="N-linked (GlcNAc...) asparagine" evidence="3">
    <location>
        <position position="138"/>
    </location>
</feature>
<feature type="glycosylation site" description="N-linked (GlcNAc...) asparagine" evidence="3">
    <location>
        <position position="267"/>
    </location>
</feature>
<feature type="glycosylation site" description="N-linked (GlcNAc...) asparagine" evidence="3">
    <location>
        <position position="290"/>
    </location>
</feature>
<feature type="glycosylation site" description="N-linked (GlcNAc...) asparagine" evidence="3">
    <location>
        <position position="401"/>
    </location>
</feature>
<feature type="glycosylation site" description="N-linked (GlcNAc...) asparagine" evidence="3">
    <location>
        <position position="422"/>
    </location>
</feature>
<protein>
    <recommendedName>
        <fullName>Sialate O-acetylesterase</fullName>
        <shortName>SIAE</shortName>
        <ecNumber evidence="2">3.1.1.53</ecNumber>
    </recommendedName>
    <alternativeName>
        <fullName>Sialic acid-specific 9-O-acetylesterase</fullName>
    </alternativeName>
</protein>
<keyword id="KW-0325">Glycoprotein</keyword>
<keyword id="KW-0378">Hydrolase</keyword>
<keyword id="KW-0458">Lysosome</keyword>
<keyword id="KW-1185">Reference proteome</keyword>
<keyword id="KW-0719">Serine esterase</keyword>
<keyword id="KW-0732">Signal</keyword>
<accession>Q5RFU0</accession>
<sequence>MVAPGLVLGLVLPLILWADRSAGIGFRFASYINNDMVLQKEPAGAVIWGFGTPGATVTVTLRQGRETIMKKVTSVKAHSDTWMVVLDPMKPGGPFEVMAQQTLEKINFTLRVHDVLFGDVWLCSGQSNMQMTVLQIFNATRELSNTAAYQSVRILSVSPTQAEQELEDLVAVDLQWSKPTSENLGHGYFKYMSAVCWLFGRHLYDTLQYPIGLIASSWGGTPIEAWSSGRSLKACGVPKQGSVPYDSVTGPSKHSVLWNAMIHPLCNMTLKGVVWYQGESNINYNTDLYNCTFPALIEDWRETFHRGSQGQTERFFPFGLVQLSSDLSKKSSDDGFPQIRWHQTADFGYVPNPKMPNTFMAVAMDLCDRDSPFGSIHPRDKQTVAYRLHLGARALAYGEKNLTFEGPLPEKIELLAHKGLLNLTYYQQIQVQKKDNKIFEISCCSDRRCKWLPASMSTVSTQSLTLAIDSCRGTVVALRYAWTTWPCEYKQCPLYHPSSALPAPPFIAFITDQDPGHQSNVAK</sequence>
<evidence type="ECO:0000250" key="1"/>
<evidence type="ECO:0000250" key="2">
    <source>
        <dbReference type="UniProtKB" id="Q9HAT2"/>
    </source>
</evidence>
<evidence type="ECO:0000255" key="3"/>
<name>SIAE_PONAB</name>
<organism>
    <name type="scientific">Pongo abelii</name>
    <name type="common">Sumatran orangutan</name>
    <name type="synonym">Pongo pygmaeus abelii</name>
    <dbReference type="NCBI Taxonomy" id="9601"/>
    <lineage>
        <taxon>Eukaryota</taxon>
        <taxon>Metazoa</taxon>
        <taxon>Chordata</taxon>
        <taxon>Craniata</taxon>
        <taxon>Vertebrata</taxon>
        <taxon>Euteleostomi</taxon>
        <taxon>Mammalia</taxon>
        <taxon>Eutheria</taxon>
        <taxon>Euarchontoglires</taxon>
        <taxon>Primates</taxon>
        <taxon>Haplorrhini</taxon>
        <taxon>Catarrhini</taxon>
        <taxon>Hominidae</taxon>
        <taxon>Pongo</taxon>
    </lineage>
</organism>
<dbReference type="EC" id="3.1.1.53" evidence="2"/>
<dbReference type="EMBL" id="CR857060">
    <property type="protein sequence ID" value="CAH89367.1"/>
    <property type="molecule type" value="mRNA"/>
</dbReference>
<dbReference type="RefSeq" id="NP_001124572.1">
    <property type="nucleotide sequence ID" value="NM_001131100.1"/>
</dbReference>
<dbReference type="SMR" id="Q5RFU0"/>
<dbReference type="FunCoup" id="Q5RFU0">
    <property type="interactions" value="185"/>
</dbReference>
<dbReference type="STRING" id="9601.ENSPPYP00000004592"/>
<dbReference type="GlyCosmos" id="Q5RFU0">
    <property type="glycosylation" value="6 sites, No reported glycans"/>
</dbReference>
<dbReference type="GeneID" id="100171407"/>
<dbReference type="KEGG" id="pon:100171407"/>
<dbReference type="CTD" id="54414"/>
<dbReference type="eggNOG" id="ENOG502QUKD">
    <property type="taxonomic scope" value="Eukaryota"/>
</dbReference>
<dbReference type="InParanoid" id="Q5RFU0"/>
<dbReference type="OrthoDB" id="42638at2759"/>
<dbReference type="Proteomes" id="UP000001595">
    <property type="component" value="Unplaced"/>
</dbReference>
<dbReference type="GO" id="GO:0005764">
    <property type="term" value="C:lysosome"/>
    <property type="evidence" value="ECO:0007669"/>
    <property type="project" value="UniProtKB-SubCell"/>
</dbReference>
<dbReference type="GO" id="GO:0106330">
    <property type="term" value="F:sialate 9-O-acetylesterase activity"/>
    <property type="evidence" value="ECO:0007669"/>
    <property type="project" value="RHEA"/>
</dbReference>
<dbReference type="GO" id="GO:0005975">
    <property type="term" value="P:carbohydrate metabolic process"/>
    <property type="evidence" value="ECO:0007669"/>
    <property type="project" value="TreeGrafter"/>
</dbReference>
<dbReference type="FunFam" id="3.40.50.1110:FF:000008">
    <property type="entry name" value="Sialate O-acetylesterase"/>
    <property type="match status" value="1"/>
</dbReference>
<dbReference type="Gene3D" id="3.40.50.1110">
    <property type="entry name" value="SGNH hydrolase"/>
    <property type="match status" value="1"/>
</dbReference>
<dbReference type="InterPro" id="IPR005181">
    <property type="entry name" value="SASA"/>
</dbReference>
<dbReference type="InterPro" id="IPR036514">
    <property type="entry name" value="SGNH_hydro_sf"/>
</dbReference>
<dbReference type="InterPro" id="IPR039329">
    <property type="entry name" value="SIAE"/>
</dbReference>
<dbReference type="PANTHER" id="PTHR22901">
    <property type="entry name" value="SIALATE O-ACETYLESTERASE"/>
    <property type="match status" value="1"/>
</dbReference>
<dbReference type="PANTHER" id="PTHR22901:SF0">
    <property type="entry name" value="SIALATE O-ACETYLESTERASE"/>
    <property type="match status" value="1"/>
</dbReference>
<dbReference type="Pfam" id="PF03629">
    <property type="entry name" value="SASA"/>
    <property type="match status" value="1"/>
</dbReference>
<dbReference type="SUPFAM" id="SSF52266">
    <property type="entry name" value="SGNH hydrolase"/>
    <property type="match status" value="1"/>
</dbReference>
<proteinExistence type="evidence at transcript level"/>
<comment type="function">
    <text evidence="2">Catalyzes the removal of O-acetyl ester groups from position 9 of the free diacetylated sialate N-acetyl-9-O-acetylneuraminate (Neu5,9Ac2) in the cytosol and of the diacetylated sialate residues of sialylglycoconjugates in the lysosomes. Together with the sialate-O-acetyltransferase they regulate the balance of acetylated sialoglycoconjugates, key players in various processes such as cell-cell interactions, host-pathogen recognition, and tumor antigenicity.</text>
</comment>
<comment type="catalytic activity">
    <reaction evidence="2">
        <text>N-acetyl-9-O-acetylneuraminate + H2O = N-acetylneuraminate + acetate + H(+)</text>
        <dbReference type="Rhea" id="RHEA:22600"/>
        <dbReference type="ChEBI" id="CHEBI:15377"/>
        <dbReference type="ChEBI" id="CHEBI:15378"/>
        <dbReference type="ChEBI" id="CHEBI:28999"/>
        <dbReference type="ChEBI" id="CHEBI:30089"/>
        <dbReference type="ChEBI" id="CHEBI:35418"/>
        <dbReference type="EC" id="3.1.1.53"/>
    </reaction>
    <physiologicalReaction direction="left-to-right" evidence="2">
        <dbReference type="Rhea" id="RHEA:22601"/>
    </physiologicalReaction>
</comment>
<comment type="catalytic activity">
    <reaction evidence="2">
        <text>an Ac-O-9-sialoglycoconjugate + H2O = a sialoglycoconjugate + acetate + H(+)</text>
        <dbReference type="Rhea" id="RHEA:80763"/>
        <dbReference type="ChEBI" id="CHEBI:15377"/>
        <dbReference type="ChEBI" id="CHEBI:15378"/>
        <dbReference type="ChEBI" id="CHEBI:30089"/>
        <dbReference type="ChEBI" id="CHEBI:231691"/>
        <dbReference type="ChEBI" id="CHEBI:231692"/>
    </reaction>
    <physiologicalReaction direction="left-to-right" evidence="2">
        <dbReference type="Rhea" id="RHEA:80764"/>
    </physiologicalReaction>
</comment>
<comment type="subcellular location">
    <subcellularLocation>
        <location evidence="1">Lysosome</location>
    </subcellularLocation>
</comment>